<keyword id="KW-1035">Host cytoplasm</keyword>
<keyword id="KW-1185">Reference proteome</keyword>
<sequence length="149" mass="17314">MKIYTQRNNKVEFSDSGSSEYSEYQRVIDADTKENTYEIVATYNRYDEIQEAGEGTDLRSMLDKYGDDYLELLPPARLGGDDTILPKSVLELENIRLQNTEYLSLLENINSKLDKQGLGDLDNFIKNWQESQKKIENEKGKKEDEKENE</sequence>
<organism>
    <name type="scientific">Spiroplasma virus 4</name>
    <name type="common">SpV4</name>
    <dbReference type="NCBI Taxonomy" id="2928746"/>
    <lineage>
        <taxon>Viruses</taxon>
        <taxon>Monodnaviria</taxon>
        <taxon>Sangervirae</taxon>
        <taxon>Phixviricota</taxon>
        <taxon>Malgrandaviricetes</taxon>
        <taxon>Petitvirales</taxon>
        <taxon>Microviridae</taxon>
        <taxon>Gokushovirinae</taxon>
        <taxon>Spiromicrovirus</taxon>
        <taxon>Spiromicrovirus SpV4</taxon>
    </lineage>
</organism>
<reference key="1">
    <citation type="journal article" date="1987" name="J. Bacteriol.">
        <title>Spiroplasma virus 4: nucleotide sequence of the viral DNA, regulatory signals, and proposed genome organization.</title>
        <authorList>
            <person name="Renaudin J."/>
            <person name="Pascarel M.-C."/>
            <person name="Bove J.-M."/>
        </authorList>
    </citation>
    <scope>NUCLEOTIDE SEQUENCE [GENOMIC DNA]</scope>
</reference>
<dbReference type="EMBL" id="M17988">
    <property type="status" value="NOT_ANNOTATED_CDS"/>
    <property type="molecule type" value="Genomic_DNA"/>
</dbReference>
<dbReference type="PIR" id="E29825">
    <property type="entry name" value="G3BPSV"/>
</dbReference>
<dbReference type="SMR" id="P11335"/>
<dbReference type="Proteomes" id="UP000002101">
    <property type="component" value="Genome"/>
</dbReference>
<dbReference type="GO" id="GO:0030430">
    <property type="term" value="C:host cell cytoplasm"/>
    <property type="evidence" value="ECO:0007669"/>
    <property type="project" value="UniProtKB-SubCell"/>
</dbReference>
<gene>
    <name type="ORF">ORF3</name>
</gene>
<name>B_SPV4</name>
<proteinExistence type="inferred from homology"/>
<evidence type="ECO:0000250" key="1"/>
<evidence type="ECO:0000305" key="2"/>
<feature type="chain" id="PRO_0000065794" description="Internal scaffolding protein ORF3">
    <location>
        <begin position="1"/>
        <end position="149"/>
    </location>
</feature>
<organismHost>
    <name type="scientific">Spiroplasma melliferum</name>
    <dbReference type="NCBI Taxonomy" id="2134"/>
</organismHost>
<protein>
    <recommendedName>
        <fullName>Internal scaffolding protein ORF3</fullName>
    </recommendedName>
</protein>
<accession>P11335</accession>
<comment type="function">
    <text evidence="1">Participates in the assembly of the viral procapsid in the cytoplasm. Released from the procapsid upon genome packaging, possibly through affinity displacement by the protein ORF8, or by proteolysis (By similarity).</text>
</comment>
<comment type="subcellular location">
    <subcellularLocation>
        <location evidence="1">Host cytoplasm</location>
    </subcellularLocation>
</comment>
<comment type="similarity">
    <text evidence="2">Belongs to the microvidae B protein family.</text>
</comment>